<name>RS12_RHOOB</name>
<gene>
    <name evidence="2" type="primary">rpsL</name>
    <name type="ordered locus">ROP_16070</name>
</gene>
<organism>
    <name type="scientific">Rhodococcus opacus (strain B4)</name>
    <dbReference type="NCBI Taxonomy" id="632772"/>
    <lineage>
        <taxon>Bacteria</taxon>
        <taxon>Bacillati</taxon>
        <taxon>Actinomycetota</taxon>
        <taxon>Actinomycetes</taxon>
        <taxon>Mycobacteriales</taxon>
        <taxon>Nocardiaceae</taxon>
        <taxon>Rhodococcus</taxon>
    </lineage>
</organism>
<proteinExistence type="inferred from homology"/>
<evidence type="ECO:0000250" key="1"/>
<evidence type="ECO:0000255" key="2">
    <source>
        <dbReference type="HAMAP-Rule" id="MF_00403"/>
    </source>
</evidence>
<evidence type="ECO:0000256" key="3">
    <source>
        <dbReference type="SAM" id="MobiDB-lite"/>
    </source>
</evidence>
<evidence type="ECO:0000305" key="4"/>
<protein>
    <recommendedName>
        <fullName evidence="2">Small ribosomal subunit protein uS12</fullName>
    </recommendedName>
    <alternativeName>
        <fullName evidence="4">30S ribosomal protein S12</fullName>
    </alternativeName>
</protein>
<keyword id="KW-0488">Methylation</keyword>
<keyword id="KW-0687">Ribonucleoprotein</keyword>
<keyword id="KW-0689">Ribosomal protein</keyword>
<keyword id="KW-0694">RNA-binding</keyword>
<keyword id="KW-0699">rRNA-binding</keyword>
<keyword id="KW-0820">tRNA-binding</keyword>
<comment type="function">
    <text evidence="2">With S4 and S5 plays an important role in translational accuracy.</text>
</comment>
<comment type="function">
    <text evidence="2">Interacts with and stabilizes bases of the 16S rRNA that are involved in tRNA selection in the A site and with the mRNA backbone. Located at the interface of the 30S and 50S subunits, it traverses the body of the 30S subunit contacting proteins on the other side and probably holding the rRNA structure together. The combined cluster of proteins S8, S12 and S17 appears to hold together the shoulder and platform of the 30S subunit.</text>
</comment>
<comment type="subunit">
    <text evidence="2">Part of the 30S ribosomal subunit. Contacts proteins S8 and S17. May interact with IF1 in the 30S initiation complex.</text>
</comment>
<comment type="similarity">
    <text evidence="2">Belongs to the universal ribosomal protein uS12 family.</text>
</comment>
<reference key="1">
    <citation type="submission" date="2009-03" db="EMBL/GenBank/DDBJ databases">
        <title>Comparison of the complete genome sequences of Rhodococcus erythropolis PR4 and Rhodococcus opacus B4.</title>
        <authorList>
            <person name="Takarada H."/>
            <person name="Sekine M."/>
            <person name="Hosoyama A."/>
            <person name="Yamada R."/>
            <person name="Fujisawa T."/>
            <person name="Omata S."/>
            <person name="Shimizu A."/>
            <person name="Tsukatani N."/>
            <person name="Tanikawa S."/>
            <person name="Fujita N."/>
            <person name="Harayama S."/>
        </authorList>
    </citation>
    <scope>NUCLEOTIDE SEQUENCE [LARGE SCALE GENOMIC DNA]</scope>
    <source>
        <strain>B4</strain>
    </source>
</reference>
<accession>C1AYS6</accession>
<dbReference type="EMBL" id="AP011115">
    <property type="protein sequence ID" value="BAH49854.1"/>
    <property type="molecule type" value="Genomic_DNA"/>
</dbReference>
<dbReference type="RefSeq" id="WP_005252198.1">
    <property type="nucleotide sequence ID" value="NC_012522.1"/>
</dbReference>
<dbReference type="SMR" id="C1AYS6"/>
<dbReference type="STRING" id="632772.ROP_16070"/>
<dbReference type="GeneID" id="69893618"/>
<dbReference type="KEGG" id="rop:ROP_16070"/>
<dbReference type="PATRIC" id="fig|632772.20.peg.1687"/>
<dbReference type="HOGENOM" id="CLU_104295_1_2_11"/>
<dbReference type="OrthoDB" id="9802366at2"/>
<dbReference type="Proteomes" id="UP000002212">
    <property type="component" value="Chromosome"/>
</dbReference>
<dbReference type="GO" id="GO:0015935">
    <property type="term" value="C:small ribosomal subunit"/>
    <property type="evidence" value="ECO:0007669"/>
    <property type="project" value="InterPro"/>
</dbReference>
<dbReference type="GO" id="GO:0019843">
    <property type="term" value="F:rRNA binding"/>
    <property type="evidence" value="ECO:0007669"/>
    <property type="project" value="UniProtKB-UniRule"/>
</dbReference>
<dbReference type="GO" id="GO:0003735">
    <property type="term" value="F:structural constituent of ribosome"/>
    <property type="evidence" value="ECO:0007669"/>
    <property type="project" value="InterPro"/>
</dbReference>
<dbReference type="GO" id="GO:0000049">
    <property type="term" value="F:tRNA binding"/>
    <property type="evidence" value="ECO:0007669"/>
    <property type="project" value="UniProtKB-UniRule"/>
</dbReference>
<dbReference type="GO" id="GO:0006412">
    <property type="term" value="P:translation"/>
    <property type="evidence" value="ECO:0007669"/>
    <property type="project" value="UniProtKB-UniRule"/>
</dbReference>
<dbReference type="CDD" id="cd03368">
    <property type="entry name" value="Ribosomal_S12"/>
    <property type="match status" value="1"/>
</dbReference>
<dbReference type="FunFam" id="2.40.50.140:FF:000001">
    <property type="entry name" value="30S ribosomal protein S12"/>
    <property type="match status" value="1"/>
</dbReference>
<dbReference type="Gene3D" id="2.40.50.140">
    <property type="entry name" value="Nucleic acid-binding proteins"/>
    <property type="match status" value="1"/>
</dbReference>
<dbReference type="HAMAP" id="MF_00403_B">
    <property type="entry name" value="Ribosomal_uS12_B"/>
    <property type="match status" value="1"/>
</dbReference>
<dbReference type="InterPro" id="IPR012340">
    <property type="entry name" value="NA-bd_OB-fold"/>
</dbReference>
<dbReference type="InterPro" id="IPR006032">
    <property type="entry name" value="Ribosomal_uS12"/>
</dbReference>
<dbReference type="InterPro" id="IPR005679">
    <property type="entry name" value="Ribosomal_uS12_bac"/>
</dbReference>
<dbReference type="NCBIfam" id="TIGR00981">
    <property type="entry name" value="rpsL_bact"/>
    <property type="match status" value="1"/>
</dbReference>
<dbReference type="PANTHER" id="PTHR11652">
    <property type="entry name" value="30S RIBOSOMAL PROTEIN S12 FAMILY MEMBER"/>
    <property type="match status" value="1"/>
</dbReference>
<dbReference type="Pfam" id="PF00164">
    <property type="entry name" value="Ribosom_S12_S23"/>
    <property type="match status" value="1"/>
</dbReference>
<dbReference type="PIRSF" id="PIRSF002133">
    <property type="entry name" value="Ribosomal_S12/S23"/>
    <property type="match status" value="1"/>
</dbReference>
<dbReference type="PRINTS" id="PR01034">
    <property type="entry name" value="RIBOSOMALS12"/>
</dbReference>
<dbReference type="SUPFAM" id="SSF50249">
    <property type="entry name" value="Nucleic acid-binding proteins"/>
    <property type="match status" value="1"/>
</dbReference>
<dbReference type="PROSITE" id="PS00055">
    <property type="entry name" value="RIBOSOMAL_S12"/>
    <property type="match status" value="1"/>
</dbReference>
<feature type="chain" id="PRO_1000134651" description="Small ribosomal subunit protein uS12">
    <location>
        <begin position="1"/>
        <end position="124"/>
    </location>
</feature>
<feature type="region of interest" description="Disordered" evidence="3">
    <location>
        <begin position="1"/>
        <end position="32"/>
    </location>
</feature>
<feature type="region of interest" description="Disordered" evidence="3">
    <location>
        <begin position="104"/>
        <end position="124"/>
    </location>
</feature>
<feature type="compositionally biased region" description="Basic residues" evidence="3">
    <location>
        <begin position="108"/>
        <end position="118"/>
    </location>
</feature>
<feature type="modified residue" description="3-methylthioaspartic acid" evidence="1">
    <location>
        <position position="89"/>
    </location>
</feature>
<sequence>MPTINQLVRKGRRDKTAKVKTAALKGSPQRRGVCTRVYTTTPKKPNSALRKVARVRLTSSVEVTAYIPGEGHNLQEHSMVLVRGGRVKDLPGVRYKIIRGSLDTQGVKGRKQARSRYGAKKEKS</sequence>